<evidence type="ECO:0000255" key="1">
    <source>
        <dbReference type="HAMAP-Rule" id="MF_00191"/>
    </source>
</evidence>
<gene>
    <name evidence="1" type="primary">ispH</name>
    <name type="ordered locus">NATL1_03421</name>
</gene>
<sequence>MDTQAFKQTLHKSDRYNRRGFGSANKRAQALAEAYQSGLIGSIRENGNLLEHGRLKVKLAEAFGFCWGVERSVAMAYETRKHYPNERIWITNEIIHNPSVNDHLRKMNVLFISEEKGVKDFSVVKDGDVVILPAFGATVQDMKLLHDRGCHIIDTTCPWVSKVWHTVEKHKKHTFTSIIHGKYKHEETLATSSFAGTYLVLFDLEEANYVSDYILGKGNREDFLKRFSKASSAGFDPDKDLQKVGVANQTTMLKSETEEIGRLFEKTMLQRFGPAQLNEHFLAINTICDATEERQGAMFSLVDEPLDLMVVIGGFNSSNTTHLQEIAISRGIRSFHIDTPERIGEETNTITHMPLEGGELLTEENFLQNGNISVGITSGASTPDRVVEDVIHKLMKIGENF</sequence>
<organism>
    <name type="scientific">Prochlorococcus marinus (strain NATL1A)</name>
    <dbReference type="NCBI Taxonomy" id="167555"/>
    <lineage>
        <taxon>Bacteria</taxon>
        <taxon>Bacillati</taxon>
        <taxon>Cyanobacteriota</taxon>
        <taxon>Cyanophyceae</taxon>
        <taxon>Synechococcales</taxon>
        <taxon>Prochlorococcaceae</taxon>
        <taxon>Prochlorococcus</taxon>
    </lineage>
</organism>
<name>ISPH_PROM1</name>
<feature type="chain" id="PRO_1000021151" description="4-hydroxy-3-methylbut-2-enyl diphosphate reductase">
    <location>
        <begin position="1"/>
        <end position="401"/>
    </location>
</feature>
<feature type="active site" description="Proton donor" evidence="1">
    <location>
        <position position="187"/>
    </location>
</feature>
<feature type="binding site" evidence="1">
    <location>
        <position position="66"/>
    </location>
    <ligand>
        <name>[4Fe-4S] cluster</name>
        <dbReference type="ChEBI" id="CHEBI:49883"/>
    </ligand>
</feature>
<feature type="binding site" evidence="1">
    <location>
        <position position="96"/>
    </location>
    <ligand>
        <name>(2E)-4-hydroxy-3-methylbut-2-enyl diphosphate</name>
        <dbReference type="ChEBI" id="CHEBI:128753"/>
    </ligand>
</feature>
<feature type="binding site" evidence="1">
    <location>
        <position position="96"/>
    </location>
    <ligand>
        <name>dimethylallyl diphosphate</name>
        <dbReference type="ChEBI" id="CHEBI:57623"/>
    </ligand>
</feature>
<feature type="binding site" evidence="1">
    <location>
        <position position="96"/>
    </location>
    <ligand>
        <name>isopentenyl diphosphate</name>
        <dbReference type="ChEBI" id="CHEBI:128769"/>
    </ligand>
</feature>
<feature type="binding site" evidence="1">
    <location>
        <position position="157"/>
    </location>
    <ligand>
        <name>[4Fe-4S] cluster</name>
        <dbReference type="ChEBI" id="CHEBI:49883"/>
    </ligand>
</feature>
<feature type="binding site" evidence="1">
    <location>
        <position position="185"/>
    </location>
    <ligand>
        <name>(2E)-4-hydroxy-3-methylbut-2-enyl diphosphate</name>
        <dbReference type="ChEBI" id="CHEBI:128753"/>
    </ligand>
</feature>
<feature type="binding site" evidence="1">
    <location>
        <position position="185"/>
    </location>
    <ligand>
        <name>dimethylallyl diphosphate</name>
        <dbReference type="ChEBI" id="CHEBI:57623"/>
    </ligand>
</feature>
<feature type="binding site" evidence="1">
    <location>
        <position position="185"/>
    </location>
    <ligand>
        <name>isopentenyl diphosphate</name>
        <dbReference type="ChEBI" id="CHEBI:128769"/>
    </ligand>
</feature>
<feature type="binding site" evidence="1">
    <location>
        <position position="250"/>
    </location>
    <ligand>
        <name>(2E)-4-hydroxy-3-methylbut-2-enyl diphosphate</name>
        <dbReference type="ChEBI" id="CHEBI:128753"/>
    </ligand>
</feature>
<feature type="binding site" evidence="1">
    <location>
        <position position="288"/>
    </location>
    <ligand>
        <name>[4Fe-4S] cluster</name>
        <dbReference type="ChEBI" id="CHEBI:49883"/>
    </ligand>
</feature>
<feature type="binding site" evidence="1">
    <location>
        <position position="317"/>
    </location>
    <ligand>
        <name>(2E)-4-hydroxy-3-methylbut-2-enyl diphosphate</name>
        <dbReference type="ChEBI" id="CHEBI:128753"/>
    </ligand>
</feature>
<feature type="binding site" evidence="1">
    <location>
        <position position="317"/>
    </location>
    <ligand>
        <name>dimethylallyl diphosphate</name>
        <dbReference type="ChEBI" id="CHEBI:57623"/>
    </ligand>
</feature>
<feature type="binding site" evidence="1">
    <location>
        <position position="317"/>
    </location>
    <ligand>
        <name>isopentenyl diphosphate</name>
        <dbReference type="ChEBI" id="CHEBI:128769"/>
    </ligand>
</feature>
<feature type="binding site" evidence="1">
    <location>
        <position position="318"/>
    </location>
    <ligand>
        <name>(2E)-4-hydroxy-3-methylbut-2-enyl diphosphate</name>
        <dbReference type="ChEBI" id="CHEBI:128753"/>
    </ligand>
</feature>
<feature type="binding site" evidence="1">
    <location>
        <position position="318"/>
    </location>
    <ligand>
        <name>dimethylallyl diphosphate</name>
        <dbReference type="ChEBI" id="CHEBI:57623"/>
    </ligand>
</feature>
<feature type="binding site" evidence="1">
    <location>
        <position position="318"/>
    </location>
    <ligand>
        <name>isopentenyl diphosphate</name>
        <dbReference type="ChEBI" id="CHEBI:128769"/>
    </ligand>
</feature>
<feature type="binding site" evidence="1">
    <location>
        <position position="319"/>
    </location>
    <ligand>
        <name>(2E)-4-hydroxy-3-methylbut-2-enyl diphosphate</name>
        <dbReference type="ChEBI" id="CHEBI:128753"/>
    </ligand>
</feature>
<feature type="binding site" evidence="1">
    <location>
        <position position="319"/>
    </location>
    <ligand>
        <name>dimethylallyl diphosphate</name>
        <dbReference type="ChEBI" id="CHEBI:57623"/>
    </ligand>
</feature>
<feature type="binding site" evidence="1">
    <location>
        <position position="319"/>
    </location>
    <ligand>
        <name>isopentenyl diphosphate</name>
        <dbReference type="ChEBI" id="CHEBI:128769"/>
    </ligand>
</feature>
<feature type="binding site" evidence="1">
    <location>
        <position position="381"/>
    </location>
    <ligand>
        <name>(2E)-4-hydroxy-3-methylbut-2-enyl diphosphate</name>
        <dbReference type="ChEBI" id="CHEBI:128753"/>
    </ligand>
</feature>
<feature type="binding site" evidence="1">
    <location>
        <position position="381"/>
    </location>
    <ligand>
        <name>dimethylallyl diphosphate</name>
        <dbReference type="ChEBI" id="CHEBI:57623"/>
    </ligand>
</feature>
<feature type="binding site" evidence="1">
    <location>
        <position position="381"/>
    </location>
    <ligand>
        <name>isopentenyl diphosphate</name>
        <dbReference type="ChEBI" id="CHEBI:128769"/>
    </ligand>
</feature>
<dbReference type="EC" id="1.17.7.4" evidence="1"/>
<dbReference type="EMBL" id="CP000553">
    <property type="protein sequence ID" value="ABM74906.1"/>
    <property type="molecule type" value="Genomic_DNA"/>
</dbReference>
<dbReference type="RefSeq" id="WP_011294263.1">
    <property type="nucleotide sequence ID" value="NC_008819.1"/>
</dbReference>
<dbReference type="SMR" id="A2C096"/>
<dbReference type="KEGG" id="pme:NATL1_03421"/>
<dbReference type="eggNOG" id="COG0761">
    <property type="taxonomic scope" value="Bacteria"/>
</dbReference>
<dbReference type="HOGENOM" id="CLU_027486_4_0_3"/>
<dbReference type="UniPathway" id="UPA00056">
    <property type="reaction ID" value="UER00097"/>
</dbReference>
<dbReference type="UniPathway" id="UPA00059">
    <property type="reaction ID" value="UER00105"/>
</dbReference>
<dbReference type="Proteomes" id="UP000002592">
    <property type="component" value="Chromosome"/>
</dbReference>
<dbReference type="GO" id="GO:0051539">
    <property type="term" value="F:4 iron, 4 sulfur cluster binding"/>
    <property type="evidence" value="ECO:0007669"/>
    <property type="project" value="UniProtKB-UniRule"/>
</dbReference>
<dbReference type="GO" id="GO:0051745">
    <property type="term" value="F:4-hydroxy-3-methylbut-2-enyl diphosphate reductase activity"/>
    <property type="evidence" value="ECO:0007669"/>
    <property type="project" value="UniProtKB-UniRule"/>
</dbReference>
<dbReference type="GO" id="GO:0046872">
    <property type="term" value="F:metal ion binding"/>
    <property type="evidence" value="ECO:0007669"/>
    <property type="project" value="UniProtKB-KW"/>
</dbReference>
<dbReference type="GO" id="GO:0050992">
    <property type="term" value="P:dimethylallyl diphosphate biosynthetic process"/>
    <property type="evidence" value="ECO:0007669"/>
    <property type="project" value="UniProtKB-UniRule"/>
</dbReference>
<dbReference type="GO" id="GO:0019288">
    <property type="term" value="P:isopentenyl diphosphate biosynthetic process, methylerythritol 4-phosphate pathway"/>
    <property type="evidence" value="ECO:0007669"/>
    <property type="project" value="UniProtKB-UniRule"/>
</dbReference>
<dbReference type="GO" id="GO:0016114">
    <property type="term" value="P:terpenoid biosynthetic process"/>
    <property type="evidence" value="ECO:0007669"/>
    <property type="project" value="UniProtKB-UniRule"/>
</dbReference>
<dbReference type="CDD" id="cd13944">
    <property type="entry name" value="lytB_ispH"/>
    <property type="match status" value="1"/>
</dbReference>
<dbReference type="Gene3D" id="3.40.50.11270">
    <property type="match status" value="1"/>
</dbReference>
<dbReference type="Gene3D" id="3.40.1010.20">
    <property type="entry name" value="4-hydroxy-3-methylbut-2-enyl diphosphate reductase, catalytic domain"/>
    <property type="match status" value="2"/>
</dbReference>
<dbReference type="HAMAP" id="MF_00191">
    <property type="entry name" value="IspH"/>
    <property type="match status" value="1"/>
</dbReference>
<dbReference type="InterPro" id="IPR003451">
    <property type="entry name" value="LytB/IspH"/>
</dbReference>
<dbReference type="NCBIfam" id="TIGR00216">
    <property type="entry name" value="ispH_lytB"/>
    <property type="match status" value="1"/>
</dbReference>
<dbReference type="NCBIfam" id="NF009911">
    <property type="entry name" value="PRK13371.1"/>
    <property type="match status" value="1"/>
</dbReference>
<dbReference type="PANTHER" id="PTHR31619">
    <property type="entry name" value="4-HYDROXY-3-METHYLBUT-2-ENYL DIPHOSPHATE REDUCTASE, CHLOROPLASTIC"/>
    <property type="match status" value="1"/>
</dbReference>
<dbReference type="PANTHER" id="PTHR31619:SF5">
    <property type="entry name" value="4-HYDROXY-3-METHYLBUT-2-ENYL DIPHOSPHATE REDUCTASE, CHLOROPLASTIC"/>
    <property type="match status" value="1"/>
</dbReference>
<dbReference type="Pfam" id="PF02401">
    <property type="entry name" value="LYTB"/>
    <property type="match status" value="1"/>
</dbReference>
<comment type="function">
    <text evidence="1">Catalyzes the conversion of 1-hydroxy-2-methyl-2-(E)-butenyl 4-diphosphate (HMBPP) into a mixture of isopentenyl diphosphate (IPP) and dimethylallyl diphosphate (DMAPP). Acts in the terminal step of the DOXP/MEP pathway for isoprenoid precursor biosynthesis.</text>
</comment>
<comment type="catalytic activity">
    <reaction evidence="1">
        <text>isopentenyl diphosphate + 2 oxidized [2Fe-2S]-[ferredoxin] + H2O = (2E)-4-hydroxy-3-methylbut-2-enyl diphosphate + 2 reduced [2Fe-2S]-[ferredoxin] + 2 H(+)</text>
        <dbReference type="Rhea" id="RHEA:24488"/>
        <dbReference type="Rhea" id="RHEA-COMP:10000"/>
        <dbReference type="Rhea" id="RHEA-COMP:10001"/>
        <dbReference type="ChEBI" id="CHEBI:15377"/>
        <dbReference type="ChEBI" id="CHEBI:15378"/>
        <dbReference type="ChEBI" id="CHEBI:33737"/>
        <dbReference type="ChEBI" id="CHEBI:33738"/>
        <dbReference type="ChEBI" id="CHEBI:128753"/>
        <dbReference type="ChEBI" id="CHEBI:128769"/>
        <dbReference type="EC" id="1.17.7.4"/>
    </reaction>
</comment>
<comment type="catalytic activity">
    <reaction evidence="1">
        <text>dimethylallyl diphosphate + 2 oxidized [2Fe-2S]-[ferredoxin] + H2O = (2E)-4-hydroxy-3-methylbut-2-enyl diphosphate + 2 reduced [2Fe-2S]-[ferredoxin] + 2 H(+)</text>
        <dbReference type="Rhea" id="RHEA:24825"/>
        <dbReference type="Rhea" id="RHEA-COMP:10000"/>
        <dbReference type="Rhea" id="RHEA-COMP:10001"/>
        <dbReference type="ChEBI" id="CHEBI:15377"/>
        <dbReference type="ChEBI" id="CHEBI:15378"/>
        <dbReference type="ChEBI" id="CHEBI:33737"/>
        <dbReference type="ChEBI" id="CHEBI:33738"/>
        <dbReference type="ChEBI" id="CHEBI:57623"/>
        <dbReference type="ChEBI" id="CHEBI:128753"/>
        <dbReference type="EC" id="1.17.7.4"/>
    </reaction>
</comment>
<comment type="cofactor">
    <cofactor evidence="1">
        <name>[4Fe-4S] cluster</name>
        <dbReference type="ChEBI" id="CHEBI:49883"/>
    </cofactor>
    <text evidence="1">Binds 1 [4Fe-4S] cluster per subunit.</text>
</comment>
<comment type="pathway">
    <text evidence="1">Isoprenoid biosynthesis; dimethylallyl diphosphate biosynthesis; dimethylallyl diphosphate from (2E)-4-hydroxy-3-methylbutenyl diphosphate: step 1/1.</text>
</comment>
<comment type="pathway">
    <text evidence="1">Isoprenoid biosynthesis; isopentenyl diphosphate biosynthesis via DXP pathway; isopentenyl diphosphate from 1-deoxy-D-xylulose 5-phosphate: step 6/6.</text>
</comment>
<comment type="similarity">
    <text evidence="1">Belongs to the IspH family.</text>
</comment>
<keyword id="KW-0004">4Fe-4S</keyword>
<keyword id="KW-0408">Iron</keyword>
<keyword id="KW-0411">Iron-sulfur</keyword>
<keyword id="KW-0414">Isoprene biosynthesis</keyword>
<keyword id="KW-0479">Metal-binding</keyword>
<keyword id="KW-0560">Oxidoreductase</keyword>
<accession>A2C096</accession>
<proteinExistence type="inferred from homology"/>
<protein>
    <recommendedName>
        <fullName evidence="1">4-hydroxy-3-methylbut-2-enyl diphosphate reductase</fullName>
        <shortName evidence="1">HMBPP reductase</shortName>
        <ecNumber evidence="1">1.17.7.4</ecNumber>
    </recommendedName>
</protein>
<reference key="1">
    <citation type="journal article" date="2007" name="PLoS Genet.">
        <title>Patterns and implications of gene gain and loss in the evolution of Prochlorococcus.</title>
        <authorList>
            <person name="Kettler G.C."/>
            <person name="Martiny A.C."/>
            <person name="Huang K."/>
            <person name="Zucker J."/>
            <person name="Coleman M.L."/>
            <person name="Rodrigue S."/>
            <person name="Chen F."/>
            <person name="Lapidus A."/>
            <person name="Ferriera S."/>
            <person name="Johnson J."/>
            <person name="Steglich C."/>
            <person name="Church G.M."/>
            <person name="Richardson P."/>
            <person name="Chisholm S.W."/>
        </authorList>
    </citation>
    <scope>NUCLEOTIDE SEQUENCE [LARGE SCALE GENOMIC DNA]</scope>
    <source>
        <strain>NATL1A</strain>
    </source>
</reference>